<name>TIM14_YARLI</name>
<keyword id="KW-0143">Chaperone</keyword>
<keyword id="KW-0472">Membrane</keyword>
<keyword id="KW-0496">Mitochondrion</keyword>
<keyword id="KW-0999">Mitochondrion inner membrane</keyword>
<keyword id="KW-0653">Protein transport</keyword>
<keyword id="KW-1185">Reference proteome</keyword>
<keyword id="KW-0811">Translocation</keyword>
<keyword id="KW-0812">Transmembrane</keyword>
<keyword id="KW-1133">Transmembrane helix</keyword>
<keyword id="KW-0813">Transport</keyword>
<dbReference type="EMBL" id="CR382128">
    <property type="protein sequence ID" value="CAG83073.1"/>
    <property type="molecule type" value="Genomic_DNA"/>
</dbReference>
<dbReference type="RefSeq" id="XP_500822.1">
    <property type="nucleotide sequence ID" value="XM_500822.1"/>
</dbReference>
<dbReference type="SMR" id="Q6CEU0"/>
<dbReference type="FunCoup" id="Q6CEU0">
    <property type="interactions" value="35"/>
</dbReference>
<dbReference type="STRING" id="284591.Q6CEU0"/>
<dbReference type="EnsemblFungi" id="CAG83073">
    <property type="protein sequence ID" value="CAG83073"/>
    <property type="gene ID" value="YALI0_B12958g"/>
</dbReference>
<dbReference type="KEGG" id="yli:2906859"/>
<dbReference type="VEuPathDB" id="FungiDB:YALI0_B12958g"/>
<dbReference type="HOGENOM" id="CLU_017633_13_0_1"/>
<dbReference type="InParanoid" id="Q6CEU0"/>
<dbReference type="OMA" id="EGSAEWY"/>
<dbReference type="OrthoDB" id="9737at4891"/>
<dbReference type="Proteomes" id="UP000001300">
    <property type="component" value="Chromosome B"/>
</dbReference>
<dbReference type="GO" id="GO:0001405">
    <property type="term" value="C:PAM complex, Tim23 associated import motor"/>
    <property type="evidence" value="ECO:0000318"/>
    <property type="project" value="GO_Central"/>
</dbReference>
<dbReference type="GO" id="GO:0001671">
    <property type="term" value="F:ATPase activator activity"/>
    <property type="evidence" value="ECO:0000318"/>
    <property type="project" value="GO_Central"/>
</dbReference>
<dbReference type="GO" id="GO:0030150">
    <property type="term" value="P:protein import into mitochondrial matrix"/>
    <property type="evidence" value="ECO:0000318"/>
    <property type="project" value="GO_Central"/>
</dbReference>
<dbReference type="CDD" id="cd06257">
    <property type="entry name" value="DnaJ"/>
    <property type="match status" value="1"/>
</dbReference>
<dbReference type="FunFam" id="1.10.287.110:FF:000001">
    <property type="entry name" value="Import inner membrane translocase subunit tim14"/>
    <property type="match status" value="1"/>
</dbReference>
<dbReference type="Gene3D" id="1.10.287.110">
    <property type="entry name" value="DnaJ domain"/>
    <property type="match status" value="1"/>
</dbReference>
<dbReference type="InterPro" id="IPR001623">
    <property type="entry name" value="DnaJ_domain"/>
</dbReference>
<dbReference type="InterPro" id="IPR036869">
    <property type="entry name" value="J_dom_sf"/>
</dbReference>
<dbReference type="PANTHER" id="PTHR12763">
    <property type="match status" value="1"/>
</dbReference>
<dbReference type="PANTHER" id="PTHR12763:SF28">
    <property type="entry name" value="GEO10507P1-RELATED"/>
    <property type="match status" value="1"/>
</dbReference>
<dbReference type="SUPFAM" id="SSF46565">
    <property type="entry name" value="Chaperone J-domain"/>
    <property type="match status" value="1"/>
</dbReference>
<evidence type="ECO:0000250" key="1"/>
<evidence type="ECO:0000255" key="2"/>
<evidence type="ECO:0000256" key="3">
    <source>
        <dbReference type="SAM" id="MobiDB-lite"/>
    </source>
</evidence>
<evidence type="ECO:0000305" key="4"/>
<protein>
    <recommendedName>
        <fullName>Mitochondrial import inner membrane translocase subunit TIM14</fullName>
    </recommendedName>
    <alternativeName>
        <fullName>Presequence translocated-associated motor subunit PAM18</fullName>
    </alternativeName>
</protein>
<sequence length="148" mass="15927">MSTTPVQPLQSEPLMDSETGVAPQIEAPQVPEGPKKGIDEQIFDYFAEHPVQATAATLVGLYALGAVFKRPAAGARGQFFKGGFENKMGPSEALQILSLRDAGLTMNKLKGQHRKIMLLNHPDRGGSPYVATKINEAKSVLEKRGGLK</sequence>
<reference key="1">
    <citation type="journal article" date="2004" name="Nature">
        <title>Genome evolution in yeasts.</title>
        <authorList>
            <person name="Dujon B."/>
            <person name="Sherman D."/>
            <person name="Fischer G."/>
            <person name="Durrens P."/>
            <person name="Casaregola S."/>
            <person name="Lafontaine I."/>
            <person name="de Montigny J."/>
            <person name="Marck C."/>
            <person name="Neuveglise C."/>
            <person name="Talla E."/>
            <person name="Goffard N."/>
            <person name="Frangeul L."/>
            <person name="Aigle M."/>
            <person name="Anthouard V."/>
            <person name="Babour A."/>
            <person name="Barbe V."/>
            <person name="Barnay S."/>
            <person name="Blanchin S."/>
            <person name="Beckerich J.-M."/>
            <person name="Beyne E."/>
            <person name="Bleykasten C."/>
            <person name="Boisrame A."/>
            <person name="Boyer J."/>
            <person name="Cattolico L."/>
            <person name="Confanioleri F."/>
            <person name="de Daruvar A."/>
            <person name="Despons L."/>
            <person name="Fabre E."/>
            <person name="Fairhead C."/>
            <person name="Ferry-Dumazet H."/>
            <person name="Groppi A."/>
            <person name="Hantraye F."/>
            <person name="Hennequin C."/>
            <person name="Jauniaux N."/>
            <person name="Joyet P."/>
            <person name="Kachouri R."/>
            <person name="Kerrest A."/>
            <person name="Koszul R."/>
            <person name="Lemaire M."/>
            <person name="Lesur I."/>
            <person name="Ma L."/>
            <person name="Muller H."/>
            <person name="Nicaud J.-M."/>
            <person name="Nikolski M."/>
            <person name="Oztas S."/>
            <person name="Ozier-Kalogeropoulos O."/>
            <person name="Pellenz S."/>
            <person name="Potier S."/>
            <person name="Richard G.-F."/>
            <person name="Straub M.-L."/>
            <person name="Suleau A."/>
            <person name="Swennen D."/>
            <person name="Tekaia F."/>
            <person name="Wesolowski-Louvel M."/>
            <person name="Westhof E."/>
            <person name="Wirth B."/>
            <person name="Zeniou-Meyer M."/>
            <person name="Zivanovic Y."/>
            <person name="Bolotin-Fukuhara M."/>
            <person name="Thierry A."/>
            <person name="Bouchier C."/>
            <person name="Caudron B."/>
            <person name="Scarpelli C."/>
            <person name="Gaillardin C."/>
            <person name="Weissenbach J."/>
            <person name="Wincker P."/>
            <person name="Souciet J.-L."/>
        </authorList>
    </citation>
    <scope>NUCLEOTIDE SEQUENCE [LARGE SCALE GENOMIC DNA]</scope>
    <source>
        <strain>CLIB 122 / E 150</strain>
    </source>
</reference>
<gene>
    <name type="primary">PAM18</name>
    <name type="synonym">TIM14</name>
    <name type="ordered locus">YALI0B12958g</name>
</gene>
<accession>Q6CEU0</accession>
<organism>
    <name type="scientific">Yarrowia lipolytica (strain CLIB 122 / E 150)</name>
    <name type="common">Yeast</name>
    <name type="synonym">Candida lipolytica</name>
    <dbReference type="NCBI Taxonomy" id="284591"/>
    <lineage>
        <taxon>Eukaryota</taxon>
        <taxon>Fungi</taxon>
        <taxon>Dikarya</taxon>
        <taxon>Ascomycota</taxon>
        <taxon>Saccharomycotina</taxon>
        <taxon>Dipodascomycetes</taxon>
        <taxon>Dipodascales</taxon>
        <taxon>Dipodascales incertae sedis</taxon>
        <taxon>Yarrowia</taxon>
    </lineage>
</organism>
<proteinExistence type="inferred from homology"/>
<comment type="function">
    <text evidence="1">Essential component of the PAM complex, a complex required for the translocation of transit peptide-containing proteins from the inner membrane into the mitochondrial matrix in an ATP-dependent manner. In the complex, it is required to stimulate activity of mtHSP70 (SSC1) (By similarity).</text>
</comment>
<comment type="subunit">
    <text evidence="1">Heterodimer with PAM16. Component of the PAM complex, at least composed of mtHsp70, MGE1, TIM44, PAM16, PAM17 and PAM18 (By similarity).</text>
</comment>
<comment type="subcellular location">
    <subcellularLocation>
        <location evidence="1">Mitochondrion inner membrane</location>
        <topology evidence="1">Single-pass membrane protein</topology>
    </subcellularLocation>
</comment>
<comment type="domain">
    <text evidence="1">The J domain is essential for co-chaperone activity and mediates the heterodimerization with the J-like domain of PAM16.</text>
</comment>
<comment type="similarity">
    <text evidence="4">Belongs to the TIM14 family.</text>
</comment>
<feature type="chain" id="PRO_0000071117" description="Mitochondrial import inner membrane translocase subunit TIM14">
    <location>
        <begin position="1"/>
        <end position="148"/>
    </location>
</feature>
<feature type="topological domain" description="Mitochondrial intermembrane" evidence="2">
    <location>
        <begin position="1"/>
        <end position="50"/>
    </location>
</feature>
<feature type="transmembrane region" description="Helical" evidence="2">
    <location>
        <begin position="51"/>
        <end position="68"/>
    </location>
</feature>
<feature type="topological domain" description="Mitochondrial matrix" evidence="2">
    <location>
        <begin position="69"/>
        <end position="148"/>
    </location>
</feature>
<feature type="domain" description="J">
    <location>
        <begin position="92"/>
        <end position="148"/>
    </location>
</feature>
<feature type="region of interest" description="Disordered" evidence="3">
    <location>
        <begin position="1"/>
        <end position="22"/>
    </location>
</feature>
<feature type="compositionally biased region" description="Polar residues" evidence="3">
    <location>
        <begin position="1"/>
        <end position="10"/>
    </location>
</feature>